<reference key="1">
    <citation type="submission" date="2002-03" db="EMBL/GenBank/DDBJ databases">
        <title>YPS1, a gene encoding yeast aspartyl protease 3 (yapsin1) in Hansenula polymorpha.</title>
        <authorList>
            <person name="Sohn M.J."/>
            <person name="Rhee S.K."/>
            <person name="Kang H.A."/>
        </authorList>
    </citation>
    <scope>NUCLEOTIDE SEQUENCE [GENOMIC DNA]</scope>
    <source>
        <strain>ATCC 26012 / BCRC 20466 / JCM 22074 / NRRL Y-7560 / DL-1</strain>
    </source>
</reference>
<reference key="2">
    <citation type="journal article" date="2013" name="BMC Genomics">
        <title>Genome sequence and analysis of methylotrophic yeast Hansenula polymorpha DL1.</title>
        <authorList>
            <person name="Ravin N.V."/>
            <person name="Eldarov M.A."/>
            <person name="Kadnikov V.V."/>
            <person name="Beletsky A.V."/>
            <person name="Schneider J."/>
            <person name="Mardanova E.S."/>
            <person name="Smekalova E.M."/>
            <person name="Zvereva M.I."/>
            <person name="Dontsova O.A."/>
            <person name="Mardanov A.V."/>
            <person name="Skryabin K.G."/>
        </authorList>
    </citation>
    <scope>NUCLEOTIDE SEQUENCE [LARGE SCALE GENOMIC DNA]</scope>
    <source>
        <strain>ATCC 26012 / BCRC 20466 / JCM 22074 / NRRL Y-7560 / DL-1</strain>
    </source>
</reference>
<gene>
    <name type="primary">RSA3</name>
    <name type="ORF">HPODL_01879</name>
</gene>
<sequence length="152" mass="17227">MPNRRARKKRRTEDFSSSSASENDSDSESVTSVQEEQPDAPETYTIDGLDTQEVSDSTQVRLQQLNADRLASIEQSLSGNLKLDINAVRQIDDVREQLQNEYLKKLLVTYSEDLDALRQKTDFKENSLKTLARLLKESGNIFDDGTLKSLVE</sequence>
<keyword id="KW-0539">Nucleus</keyword>
<keyword id="KW-1185">Reference proteome</keyword>
<keyword id="KW-0687">Ribonucleoprotein</keyword>
<keyword id="KW-0690">Ribosome biogenesis</keyword>
<organism>
    <name type="scientific">Ogataea parapolymorpha (strain ATCC 26012 / BCRC 20466 / JCM 22074 / NRRL Y-7560 / DL-1)</name>
    <name type="common">Yeast</name>
    <name type="synonym">Hansenula polymorpha</name>
    <dbReference type="NCBI Taxonomy" id="871575"/>
    <lineage>
        <taxon>Eukaryota</taxon>
        <taxon>Fungi</taxon>
        <taxon>Dikarya</taxon>
        <taxon>Ascomycota</taxon>
        <taxon>Saccharomycotina</taxon>
        <taxon>Pichiomycetes</taxon>
        <taxon>Pichiales</taxon>
        <taxon>Pichiaceae</taxon>
        <taxon>Ogataea</taxon>
    </lineage>
</organism>
<evidence type="ECO:0000250" key="1"/>
<evidence type="ECO:0000256" key="2">
    <source>
        <dbReference type="SAM" id="MobiDB-lite"/>
    </source>
</evidence>
<evidence type="ECO:0000305" key="3"/>
<comment type="function">
    <text evidence="1">Required for efficient biogenesis of the 60S ribosomal subunit.</text>
</comment>
<comment type="subunit">
    <text evidence="1">Associates with nucleolar pre-ribosomal particles.</text>
</comment>
<comment type="subcellular location">
    <subcellularLocation>
        <location evidence="1">Nucleus</location>
        <location evidence="1">Nucleolus</location>
    </subcellularLocation>
</comment>
<comment type="similarity">
    <text evidence="3">Belongs to the RSA3 family.</text>
</comment>
<proteinExistence type="inferred from homology"/>
<accession>Q5QT59</accession>
<accession>E7R5A5</accession>
<accession>W1QDL6</accession>
<dbReference type="EMBL" id="AF493990">
    <property type="protein sequence ID" value="AAQ06629.1"/>
    <property type="molecule type" value="Genomic_DNA"/>
</dbReference>
<dbReference type="EMBL" id="AEOI02000009">
    <property type="protein sequence ID" value="ESW97797.1"/>
    <property type="molecule type" value="Genomic_DNA"/>
</dbReference>
<dbReference type="RefSeq" id="XP_013933882.1">
    <property type="nucleotide sequence ID" value="XM_014078407.1"/>
</dbReference>
<dbReference type="SMR" id="Q5QT59"/>
<dbReference type="STRING" id="871575.Q5QT59"/>
<dbReference type="GeneID" id="25771335"/>
<dbReference type="KEGG" id="opa:HPODL_01879"/>
<dbReference type="HOGENOM" id="CLU_119118_0_0_1"/>
<dbReference type="OMA" id="DAHNNNK"/>
<dbReference type="OrthoDB" id="69550at2759"/>
<dbReference type="Proteomes" id="UP000008673">
    <property type="component" value="Chromosome VI"/>
</dbReference>
<dbReference type="GO" id="GO:0005730">
    <property type="term" value="C:nucleolus"/>
    <property type="evidence" value="ECO:0007669"/>
    <property type="project" value="UniProtKB-SubCell"/>
</dbReference>
<dbReference type="GO" id="GO:0030687">
    <property type="term" value="C:preribosome, large subunit precursor"/>
    <property type="evidence" value="ECO:0007669"/>
    <property type="project" value="TreeGrafter"/>
</dbReference>
<dbReference type="GO" id="GO:0000027">
    <property type="term" value="P:ribosomal large subunit assembly"/>
    <property type="evidence" value="ECO:0007669"/>
    <property type="project" value="TreeGrafter"/>
</dbReference>
<dbReference type="InterPro" id="IPR051898">
    <property type="entry name" value="Ribosome_Assembly_3"/>
</dbReference>
<dbReference type="InterPro" id="IPR028217">
    <property type="entry name" value="Rsa3_C"/>
</dbReference>
<dbReference type="PANTHER" id="PTHR28127">
    <property type="entry name" value="RIBOSOME ASSEMBLY PROTEIN 3"/>
    <property type="match status" value="1"/>
</dbReference>
<dbReference type="PANTHER" id="PTHR28127:SF1">
    <property type="entry name" value="RIBOSOME ASSEMBLY PROTEIN 3"/>
    <property type="match status" value="1"/>
</dbReference>
<dbReference type="Pfam" id="PF14615">
    <property type="entry name" value="Rsa3"/>
    <property type="match status" value="1"/>
</dbReference>
<name>RSA3_OGAPD</name>
<feature type="chain" id="PRO_0000097466" description="Ribosome assembly protein 3">
    <location>
        <begin position="1"/>
        <end position="152"/>
    </location>
</feature>
<feature type="region of interest" description="Disordered" evidence="2">
    <location>
        <begin position="1"/>
        <end position="51"/>
    </location>
</feature>
<feature type="compositionally biased region" description="Basic residues" evidence="2">
    <location>
        <begin position="1"/>
        <end position="10"/>
    </location>
</feature>
<protein>
    <recommendedName>
        <fullName>Ribosome assembly protein 3</fullName>
    </recommendedName>
</protein>